<comment type="function">
    <text evidence="1">NDH-1 shuttles electrons from an unknown electron donor, via FMN and iron-sulfur (Fe-S) centers, to quinones in the respiratory and/or the photosynthetic chain. The immediate electron acceptor for the enzyme in this species is believed to be plastoquinone. Couples the redox reaction to proton translocation, and thus conserves the redox energy in a proton gradient. Cyanobacterial NDH-1 also plays a role in inorganic carbon-concentration.</text>
</comment>
<comment type="catalytic activity">
    <reaction evidence="1">
        <text>a plastoquinone + NADH + (n+1) H(+)(in) = a plastoquinol + NAD(+) + n H(+)(out)</text>
        <dbReference type="Rhea" id="RHEA:42608"/>
        <dbReference type="Rhea" id="RHEA-COMP:9561"/>
        <dbReference type="Rhea" id="RHEA-COMP:9562"/>
        <dbReference type="ChEBI" id="CHEBI:15378"/>
        <dbReference type="ChEBI" id="CHEBI:17757"/>
        <dbReference type="ChEBI" id="CHEBI:57540"/>
        <dbReference type="ChEBI" id="CHEBI:57945"/>
        <dbReference type="ChEBI" id="CHEBI:62192"/>
    </reaction>
</comment>
<comment type="catalytic activity">
    <reaction evidence="1">
        <text>a plastoquinone + NADPH + (n+1) H(+)(in) = a plastoquinol + NADP(+) + n H(+)(out)</text>
        <dbReference type="Rhea" id="RHEA:42612"/>
        <dbReference type="Rhea" id="RHEA-COMP:9561"/>
        <dbReference type="Rhea" id="RHEA-COMP:9562"/>
        <dbReference type="ChEBI" id="CHEBI:15378"/>
        <dbReference type="ChEBI" id="CHEBI:17757"/>
        <dbReference type="ChEBI" id="CHEBI:57783"/>
        <dbReference type="ChEBI" id="CHEBI:58349"/>
        <dbReference type="ChEBI" id="CHEBI:62192"/>
    </reaction>
</comment>
<comment type="cofactor">
    <cofactor evidence="1">
        <name>[4Fe-4S] cluster</name>
        <dbReference type="ChEBI" id="CHEBI:49883"/>
    </cofactor>
    <text evidence="1">Binds 1 [4Fe-4S] cluster.</text>
</comment>
<comment type="subunit">
    <text evidence="1">NDH-1 can be composed of about 15 different subunits; different subcomplexes with different compositions have been identified which probably have different functions.</text>
</comment>
<comment type="subcellular location">
    <subcellularLocation>
        <location evidence="1">Cellular thylakoid membrane</location>
        <topology evidence="1">Peripheral membrane protein</topology>
        <orientation evidence="1">Cytoplasmic side</orientation>
    </subcellularLocation>
</comment>
<comment type="similarity">
    <text evidence="1">Belongs to the complex I 20 kDa subunit family.</text>
</comment>
<keyword id="KW-0004">4Fe-4S</keyword>
<keyword id="KW-0408">Iron</keyword>
<keyword id="KW-0411">Iron-sulfur</keyword>
<keyword id="KW-0472">Membrane</keyword>
<keyword id="KW-0479">Metal-binding</keyword>
<keyword id="KW-0520">NAD</keyword>
<keyword id="KW-0521">NADP</keyword>
<keyword id="KW-0618">Plastoquinone</keyword>
<keyword id="KW-0874">Quinone</keyword>
<keyword id="KW-1185">Reference proteome</keyword>
<keyword id="KW-0793">Thylakoid</keyword>
<keyword id="KW-1278">Translocase</keyword>
<keyword id="KW-0813">Transport</keyword>
<reference key="1">
    <citation type="journal article" date="2007" name="PLoS Genet.">
        <title>Patterns and implications of gene gain and loss in the evolution of Prochlorococcus.</title>
        <authorList>
            <person name="Kettler G.C."/>
            <person name="Martiny A.C."/>
            <person name="Huang K."/>
            <person name="Zucker J."/>
            <person name="Coleman M.L."/>
            <person name="Rodrigue S."/>
            <person name="Chen F."/>
            <person name="Lapidus A."/>
            <person name="Ferriera S."/>
            <person name="Johnson J."/>
            <person name="Steglich C."/>
            <person name="Church G.M."/>
            <person name="Richardson P."/>
            <person name="Chisholm S.W."/>
        </authorList>
    </citation>
    <scope>NUCLEOTIDE SEQUENCE [LARGE SCALE GENOMIC DNA]</scope>
    <source>
        <strain>MIT 9301</strain>
    </source>
</reference>
<gene>
    <name evidence="1" type="primary">ndhK</name>
    <name type="ordered locus">P9301_03171</name>
</gene>
<feature type="chain" id="PRO_0000358452" description="NAD(P)H-quinone oxidoreductase subunit K">
    <location>
        <begin position="1"/>
        <end position="244"/>
    </location>
</feature>
<feature type="region of interest" description="Disordered" evidence="2">
    <location>
        <begin position="213"/>
        <end position="244"/>
    </location>
</feature>
<feature type="compositionally biased region" description="Basic and acidic residues" evidence="2">
    <location>
        <begin position="221"/>
        <end position="238"/>
    </location>
</feature>
<feature type="binding site" evidence="1">
    <location>
        <position position="60"/>
    </location>
    <ligand>
        <name>[4Fe-4S] cluster</name>
        <dbReference type="ChEBI" id="CHEBI:49883"/>
    </ligand>
</feature>
<feature type="binding site" evidence="1">
    <location>
        <position position="61"/>
    </location>
    <ligand>
        <name>[4Fe-4S] cluster</name>
        <dbReference type="ChEBI" id="CHEBI:49883"/>
    </ligand>
</feature>
<feature type="binding site" evidence="1">
    <location>
        <position position="125"/>
    </location>
    <ligand>
        <name>[4Fe-4S] cluster</name>
        <dbReference type="ChEBI" id="CHEBI:49883"/>
    </ligand>
</feature>
<feature type="binding site" evidence="1">
    <location>
        <position position="156"/>
    </location>
    <ligand>
        <name>[4Fe-4S] cluster</name>
        <dbReference type="ChEBI" id="CHEBI:49883"/>
    </ligand>
</feature>
<organism>
    <name type="scientific">Prochlorococcus marinus (strain MIT 9301)</name>
    <dbReference type="NCBI Taxonomy" id="167546"/>
    <lineage>
        <taxon>Bacteria</taxon>
        <taxon>Bacillati</taxon>
        <taxon>Cyanobacteriota</taxon>
        <taxon>Cyanophyceae</taxon>
        <taxon>Synechococcales</taxon>
        <taxon>Prochlorococcaceae</taxon>
        <taxon>Prochlorococcus</taxon>
    </lineage>
</organism>
<protein>
    <recommendedName>
        <fullName evidence="1">NAD(P)H-quinone oxidoreductase subunit K</fullName>
        <ecNumber evidence="1">7.1.1.-</ecNumber>
    </recommendedName>
    <alternativeName>
        <fullName evidence="1">NAD(P)H dehydrogenase I subunit K</fullName>
    </alternativeName>
    <alternativeName>
        <fullName evidence="1">NDH-1 subunit K</fullName>
        <shortName evidence="1">NDH-K</shortName>
    </alternativeName>
</protein>
<name>NDHK_PROM0</name>
<evidence type="ECO:0000255" key="1">
    <source>
        <dbReference type="HAMAP-Rule" id="MF_01356"/>
    </source>
</evidence>
<evidence type="ECO:0000256" key="2">
    <source>
        <dbReference type="SAM" id="MobiDB-lite"/>
    </source>
</evidence>
<dbReference type="EC" id="7.1.1.-" evidence="1"/>
<dbReference type="EMBL" id="CP000576">
    <property type="protein sequence ID" value="ABO16940.1"/>
    <property type="molecule type" value="Genomic_DNA"/>
</dbReference>
<dbReference type="SMR" id="A3PB15"/>
<dbReference type="STRING" id="167546.P9301_03171"/>
<dbReference type="KEGG" id="pmg:P9301_03171"/>
<dbReference type="eggNOG" id="COG0377">
    <property type="taxonomic scope" value="Bacteria"/>
</dbReference>
<dbReference type="HOGENOM" id="CLU_055737_2_0_3"/>
<dbReference type="OrthoDB" id="9786737at2"/>
<dbReference type="Proteomes" id="UP000001430">
    <property type="component" value="Chromosome"/>
</dbReference>
<dbReference type="GO" id="GO:0031676">
    <property type="term" value="C:plasma membrane-derived thylakoid membrane"/>
    <property type="evidence" value="ECO:0007669"/>
    <property type="project" value="UniProtKB-SubCell"/>
</dbReference>
<dbReference type="GO" id="GO:0045271">
    <property type="term" value="C:respiratory chain complex I"/>
    <property type="evidence" value="ECO:0007669"/>
    <property type="project" value="TreeGrafter"/>
</dbReference>
<dbReference type="GO" id="GO:0051539">
    <property type="term" value="F:4 iron, 4 sulfur cluster binding"/>
    <property type="evidence" value="ECO:0007669"/>
    <property type="project" value="UniProtKB-KW"/>
</dbReference>
<dbReference type="GO" id="GO:0005506">
    <property type="term" value="F:iron ion binding"/>
    <property type="evidence" value="ECO:0007669"/>
    <property type="project" value="UniProtKB-UniRule"/>
</dbReference>
<dbReference type="GO" id="GO:0008137">
    <property type="term" value="F:NADH dehydrogenase (ubiquinone) activity"/>
    <property type="evidence" value="ECO:0007669"/>
    <property type="project" value="InterPro"/>
</dbReference>
<dbReference type="GO" id="GO:0048038">
    <property type="term" value="F:quinone binding"/>
    <property type="evidence" value="ECO:0007669"/>
    <property type="project" value="UniProtKB-KW"/>
</dbReference>
<dbReference type="GO" id="GO:0009060">
    <property type="term" value="P:aerobic respiration"/>
    <property type="evidence" value="ECO:0007669"/>
    <property type="project" value="TreeGrafter"/>
</dbReference>
<dbReference type="GO" id="GO:0015990">
    <property type="term" value="P:electron transport coupled proton transport"/>
    <property type="evidence" value="ECO:0007669"/>
    <property type="project" value="TreeGrafter"/>
</dbReference>
<dbReference type="GO" id="GO:0019684">
    <property type="term" value="P:photosynthesis, light reaction"/>
    <property type="evidence" value="ECO:0007669"/>
    <property type="project" value="UniProtKB-UniRule"/>
</dbReference>
<dbReference type="FunFam" id="3.40.50.12280:FF:000003">
    <property type="entry name" value="NAD(P)H-quinone oxidoreductase subunit K, chloroplastic"/>
    <property type="match status" value="1"/>
</dbReference>
<dbReference type="Gene3D" id="3.40.50.12280">
    <property type="match status" value="1"/>
</dbReference>
<dbReference type="HAMAP" id="MF_01356">
    <property type="entry name" value="NDH1_NuoB"/>
    <property type="match status" value="1"/>
</dbReference>
<dbReference type="InterPro" id="IPR006137">
    <property type="entry name" value="NADH_UbQ_OxRdtase-like_20kDa"/>
</dbReference>
<dbReference type="InterPro" id="IPR006138">
    <property type="entry name" value="NADH_UQ_OxRdtase_20Kd_su"/>
</dbReference>
<dbReference type="NCBIfam" id="TIGR01957">
    <property type="entry name" value="nuoB_fam"/>
    <property type="match status" value="1"/>
</dbReference>
<dbReference type="NCBIfam" id="NF005012">
    <property type="entry name" value="PRK06411.1"/>
    <property type="match status" value="1"/>
</dbReference>
<dbReference type="PANTHER" id="PTHR11995">
    <property type="entry name" value="NADH DEHYDROGENASE"/>
    <property type="match status" value="1"/>
</dbReference>
<dbReference type="PANTHER" id="PTHR11995:SF14">
    <property type="entry name" value="NADH DEHYDROGENASE [UBIQUINONE] IRON-SULFUR PROTEIN 7, MITOCHONDRIAL"/>
    <property type="match status" value="1"/>
</dbReference>
<dbReference type="Pfam" id="PF01058">
    <property type="entry name" value="Oxidored_q6"/>
    <property type="match status" value="1"/>
</dbReference>
<dbReference type="SUPFAM" id="SSF56770">
    <property type="entry name" value="HydA/Nqo6-like"/>
    <property type="match status" value="1"/>
</dbReference>
<dbReference type="PROSITE" id="PS01150">
    <property type="entry name" value="COMPLEX1_20K"/>
    <property type="match status" value="1"/>
</dbReference>
<proteinExistence type="inferred from homology"/>
<sequence>MNPQLSPKAIREIREGTCNPLGAPQVTTDLSENIILTSLDDLHNWARLSSLWPLLYGTACCFIEFAALIGSRFDFDRFGLVPRSSPRQADLLIVAGTVTMKMAPALVRLYEQMPEPKYVIAMGACTITGGMFSADSTTAVRGVDKLIPVDLYLPGCPPRPEAIFDAVIKLRKKVGNESILERTKTEQTHRYITSDHEMNLVFSENTGEYLNKTSANSIPSSKKEKITELPDNNEKAEIIDTLEN</sequence>
<accession>A3PB15</accession>